<sequence length="117" mass="12727">MDKKASRIRRATRARRKIAELCATRLVVHRTPRHTYAQVIAPNGSEVIAAASTVEKAIREQLGNTSNKAAAEAIGKLIAERAIEKGITNVAFDRSGFQYHGRVAALAESAREAGLKF</sequence>
<evidence type="ECO:0000255" key="1">
    <source>
        <dbReference type="HAMAP-Rule" id="MF_01337"/>
    </source>
</evidence>
<evidence type="ECO:0000305" key="2"/>
<dbReference type="EMBL" id="CP001139">
    <property type="protein sequence ID" value="ACH65004.1"/>
    <property type="molecule type" value="Genomic_DNA"/>
</dbReference>
<dbReference type="RefSeq" id="WP_005417253.1">
    <property type="nucleotide sequence ID" value="NC_011184.1"/>
</dbReference>
<dbReference type="SMR" id="B5FG25"/>
<dbReference type="KEGG" id="vfm:VFMJ11_0241"/>
<dbReference type="HOGENOM" id="CLU_098841_0_1_6"/>
<dbReference type="Proteomes" id="UP000001857">
    <property type="component" value="Chromosome I"/>
</dbReference>
<dbReference type="GO" id="GO:0022625">
    <property type="term" value="C:cytosolic large ribosomal subunit"/>
    <property type="evidence" value="ECO:0007669"/>
    <property type="project" value="TreeGrafter"/>
</dbReference>
<dbReference type="GO" id="GO:0008097">
    <property type="term" value="F:5S rRNA binding"/>
    <property type="evidence" value="ECO:0007669"/>
    <property type="project" value="TreeGrafter"/>
</dbReference>
<dbReference type="GO" id="GO:0003735">
    <property type="term" value="F:structural constituent of ribosome"/>
    <property type="evidence" value="ECO:0007669"/>
    <property type="project" value="InterPro"/>
</dbReference>
<dbReference type="GO" id="GO:0006412">
    <property type="term" value="P:translation"/>
    <property type="evidence" value="ECO:0007669"/>
    <property type="project" value="UniProtKB-UniRule"/>
</dbReference>
<dbReference type="CDD" id="cd00432">
    <property type="entry name" value="Ribosomal_L18_L5e"/>
    <property type="match status" value="1"/>
</dbReference>
<dbReference type="FunFam" id="3.30.420.100:FF:000001">
    <property type="entry name" value="50S ribosomal protein L18"/>
    <property type="match status" value="1"/>
</dbReference>
<dbReference type="Gene3D" id="3.30.420.100">
    <property type="match status" value="1"/>
</dbReference>
<dbReference type="HAMAP" id="MF_01337_B">
    <property type="entry name" value="Ribosomal_uL18_B"/>
    <property type="match status" value="1"/>
</dbReference>
<dbReference type="InterPro" id="IPR004389">
    <property type="entry name" value="Ribosomal_uL18_bac-type"/>
</dbReference>
<dbReference type="InterPro" id="IPR005484">
    <property type="entry name" value="Ribosomal_uL18_bac/euk"/>
</dbReference>
<dbReference type="NCBIfam" id="TIGR00060">
    <property type="entry name" value="L18_bact"/>
    <property type="match status" value="1"/>
</dbReference>
<dbReference type="PANTHER" id="PTHR12899">
    <property type="entry name" value="39S RIBOSOMAL PROTEIN L18, MITOCHONDRIAL"/>
    <property type="match status" value="1"/>
</dbReference>
<dbReference type="PANTHER" id="PTHR12899:SF3">
    <property type="entry name" value="LARGE RIBOSOMAL SUBUNIT PROTEIN UL18M"/>
    <property type="match status" value="1"/>
</dbReference>
<dbReference type="Pfam" id="PF00861">
    <property type="entry name" value="Ribosomal_L18p"/>
    <property type="match status" value="1"/>
</dbReference>
<dbReference type="SUPFAM" id="SSF53137">
    <property type="entry name" value="Translational machinery components"/>
    <property type="match status" value="1"/>
</dbReference>
<accession>B5FG25</accession>
<reference key="1">
    <citation type="submission" date="2008-08" db="EMBL/GenBank/DDBJ databases">
        <title>Complete sequence of Vibrio fischeri strain MJ11.</title>
        <authorList>
            <person name="Mandel M.J."/>
            <person name="Stabb E.V."/>
            <person name="Ruby E.G."/>
            <person name="Ferriera S."/>
            <person name="Johnson J."/>
            <person name="Kravitz S."/>
            <person name="Beeson K."/>
            <person name="Sutton G."/>
            <person name="Rogers Y.-H."/>
            <person name="Friedman R."/>
            <person name="Frazier M."/>
            <person name="Venter J.C."/>
        </authorList>
    </citation>
    <scope>NUCLEOTIDE SEQUENCE [LARGE SCALE GENOMIC DNA]</scope>
    <source>
        <strain>MJ11</strain>
    </source>
</reference>
<protein>
    <recommendedName>
        <fullName evidence="1">Large ribosomal subunit protein uL18</fullName>
    </recommendedName>
    <alternativeName>
        <fullName evidence="2">50S ribosomal protein L18</fullName>
    </alternativeName>
</protein>
<feature type="chain" id="PRO_1000142737" description="Large ribosomal subunit protein uL18">
    <location>
        <begin position="1"/>
        <end position="117"/>
    </location>
</feature>
<organism>
    <name type="scientific">Aliivibrio fischeri (strain MJ11)</name>
    <name type="common">Vibrio fischeri</name>
    <dbReference type="NCBI Taxonomy" id="388396"/>
    <lineage>
        <taxon>Bacteria</taxon>
        <taxon>Pseudomonadati</taxon>
        <taxon>Pseudomonadota</taxon>
        <taxon>Gammaproteobacteria</taxon>
        <taxon>Vibrionales</taxon>
        <taxon>Vibrionaceae</taxon>
        <taxon>Aliivibrio</taxon>
    </lineage>
</organism>
<comment type="function">
    <text evidence="1">This is one of the proteins that bind and probably mediate the attachment of the 5S RNA into the large ribosomal subunit, where it forms part of the central protuberance.</text>
</comment>
<comment type="subunit">
    <text evidence="1">Part of the 50S ribosomal subunit; part of the 5S rRNA/L5/L18/L25 subcomplex. Contacts the 5S and 23S rRNAs.</text>
</comment>
<comment type="similarity">
    <text evidence="1">Belongs to the universal ribosomal protein uL18 family.</text>
</comment>
<proteinExistence type="inferred from homology"/>
<name>RL18_ALIFM</name>
<gene>
    <name evidence="1" type="primary">rplR</name>
    <name type="ordered locus">VFMJ11_0241</name>
</gene>
<keyword id="KW-0687">Ribonucleoprotein</keyword>
<keyword id="KW-0689">Ribosomal protein</keyword>
<keyword id="KW-0694">RNA-binding</keyword>
<keyword id="KW-0699">rRNA-binding</keyword>